<comment type="function">
    <text evidence="1">Provides the (R)-glutamate required for cell wall biosynthesis.</text>
</comment>
<comment type="catalytic activity">
    <reaction evidence="1">
        <text>L-glutamate = D-glutamate</text>
        <dbReference type="Rhea" id="RHEA:12813"/>
        <dbReference type="ChEBI" id="CHEBI:29985"/>
        <dbReference type="ChEBI" id="CHEBI:29986"/>
        <dbReference type="EC" id="5.1.1.3"/>
    </reaction>
</comment>
<comment type="pathway">
    <text evidence="1">Cell wall biogenesis; peptidoglycan biosynthesis.</text>
</comment>
<comment type="similarity">
    <text evidence="1">Belongs to the aspartate/glutamate racemases family.</text>
</comment>
<proteinExistence type="inferred from homology"/>
<sequence>MSSPLLPVGVFDSGVGGLTVARAIIDQLPDEDIVYVGDTGNGPYGPLSIPEIRAHALAICDDLVGRGVKILVIACNTASAACLRDARERYDVPVVEVILPAVRRAVAATRNGRIGVIGTRATIASHAYQDAFAAARDTEITAVACPRFVDFVECGVTSGRQVLGLAEGYLEPLQRSGVDTLVLGCTHYPLLAGLIQLAMGENVTLVSSAEETAKEVLRVLTERDLLRRHDAPPVNRVFEATGDPEAFIQLAARFLGPAVSGVQPARLHSRVR</sequence>
<keyword id="KW-0133">Cell shape</keyword>
<keyword id="KW-0961">Cell wall biogenesis/degradation</keyword>
<keyword id="KW-0413">Isomerase</keyword>
<keyword id="KW-0573">Peptidoglycan synthesis</keyword>
<keyword id="KW-1185">Reference proteome</keyword>
<reference key="1">
    <citation type="submission" date="1994-03" db="EMBL/GenBank/DDBJ databases">
        <authorList>
            <person name="Smith D.R."/>
            <person name="Robison K."/>
        </authorList>
    </citation>
    <scope>NUCLEOTIDE SEQUENCE [GENOMIC DNA]</scope>
</reference>
<reference key="2">
    <citation type="journal article" date="2001" name="Nature">
        <title>Massive gene decay in the leprosy bacillus.</title>
        <authorList>
            <person name="Cole S.T."/>
            <person name="Eiglmeier K."/>
            <person name="Parkhill J."/>
            <person name="James K.D."/>
            <person name="Thomson N.R."/>
            <person name="Wheeler P.R."/>
            <person name="Honore N."/>
            <person name="Garnier T."/>
            <person name="Churcher C.M."/>
            <person name="Harris D.E."/>
            <person name="Mungall K.L."/>
            <person name="Basham D."/>
            <person name="Brown D."/>
            <person name="Chillingworth T."/>
            <person name="Connor R."/>
            <person name="Davies R.M."/>
            <person name="Devlin K."/>
            <person name="Duthoy S."/>
            <person name="Feltwell T."/>
            <person name="Fraser A."/>
            <person name="Hamlin N."/>
            <person name="Holroyd S."/>
            <person name="Hornsby T."/>
            <person name="Jagels K."/>
            <person name="Lacroix C."/>
            <person name="Maclean J."/>
            <person name="Moule S."/>
            <person name="Murphy L.D."/>
            <person name="Oliver K."/>
            <person name="Quail M.A."/>
            <person name="Rajandream M.A."/>
            <person name="Rutherford K.M."/>
            <person name="Rutter S."/>
            <person name="Seeger K."/>
            <person name="Simon S."/>
            <person name="Simmonds M."/>
            <person name="Skelton J."/>
            <person name="Squares R."/>
            <person name="Squares S."/>
            <person name="Stevens K."/>
            <person name="Taylor K."/>
            <person name="Whitehead S."/>
            <person name="Woodward J.R."/>
            <person name="Barrell B.G."/>
        </authorList>
    </citation>
    <scope>NUCLEOTIDE SEQUENCE [LARGE SCALE GENOMIC DNA]</scope>
    <source>
        <strain>TN</strain>
    </source>
</reference>
<name>MURI_MYCLE</name>
<evidence type="ECO:0000255" key="1">
    <source>
        <dbReference type="HAMAP-Rule" id="MF_00258"/>
    </source>
</evidence>
<accession>P46705</accession>
<gene>
    <name evidence="1" type="primary">murI</name>
    <name type="ordered locus">ML1172</name>
    <name type="ORF">B1549_C2_210</name>
</gene>
<protein>
    <recommendedName>
        <fullName evidence="1">Glutamate racemase</fullName>
        <ecNumber evidence="1">5.1.1.3</ecNumber>
    </recommendedName>
</protein>
<feature type="chain" id="PRO_0000095488" description="Glutamate racemase">
    <location>
        <begin position="1"/>
        <end position="272"/>
    </location>
</feature>
<feature type="active site" description="Proton donor/acceptor" evidence="1">
    <location>
        <position position="75"/>
    </location>
</feature>
<feature type="active site" description="Proton donor/acceptor" evidence="1">
    <location>
        <position position="185"/>
    </location>
</feature>
<feature type="binding site" evidence="1">
    <location>
        <begin position="12"/>
        <end position="13"/>
    </location>
    <ligand>
        <name>substrate</name>
    </ligand>
</feature>
<feature type="binding site" evidence="1">
    <location>
        <begin position="44"/>
        <end position="45"/>
    </location>
    <ligand>
        <name>substrate</name>
    </ligand>
</feature>
<feature type="binding site" evidence="1">
    <location>
        <begin position="76"/>
        <end position="77"/>
    </location>
    <ligand>
        <name>substrate</name>
    </ligand>
</feature>
<feature type="binding site" evidence="1">
    <location>
        <begin position="186"/>
        <end position="187"/>
    </location>
    <ligand>
        <name>substrate</name>
    </ligand>
</feature>
<organism>
    <name type="scientific">Mycobacterium leprae (strain TN)</name>
    <dbReference type="NCBI Taxonomy" id="272631"/>
    <lineage>
        <taxon>Bacteria</taxon>
        <taxon>Bacillati</taxon>
        <taxon>Actinomycetota</taxon>
        <taxon>Actinomycetes</taxon>
        <taxon>Mycobacteriales</taxon>
        <taxon>Mycobacteriaceae</taxon>
        <taxon>Mycobacterium</taxon>
    </lineage>
</organism>
<dbReference type="EC" id="5.1.1.3" evidence="1"/>
<dbReference type="EMBL" id="U00014">
    <property type="protein sequence ID" value="AAA50890.1"/>
    <property type="molecule type" value="Genomic_DNA"/>
</dbReference>
<dbReference type="EMBL" id="AL583921">
    <property type="protein sequence ID" value="CAC31553.1"/>
    <property type="molecule type" value="Genomic_DNA"/>
</dbReference>
<dbReference type="PIR" id="S72790">
    <property type="entry name" value="S72790"/>
</dbReference>
<dbReference type="RefSeq" id="NP_301854.1">
    <property type="nucleotide sequence ID" value="NC_002677.1"/>
</dbReference>
<dbReference type="RefSeq" id="WP_010908178.1">
    <property type="nucleotide sequence ID" value="NC_002677.1"/>
</dbReference>
<dbReference type="SMR" id="P46705"/>
<dbReference type="STRING" id="272631.gene:17575002"/>
<dbReference type="KEGG" id="mle:ML1172"/>
<dbReference type="PATRIC" id="fig|272631.5.peg.2129"/>
<dbReference type="Leproma" id="ML1172"/>
<dbReference type="eggNOG" id="COG0796">
    <property type="taxonomic scope" value="Bacteria"/>
</dbReference>
<dbReference type="HOGENOM" id="CLU_052344_0_1_11"/>
<dbReference type="OrthoDB" id="9801055at2"/>
<dbReference type="UniPathway" id="UPA00219"/>
<dbReference type="Proteomes" id="UP000000806">
    <property type="component" value="Chromosome"/>
</dbReference>
<dbReference type="GO" id="GO:0008881">
    <property type="term" value="F:glutamate racemase activity"/>
    <property type="evidence" value="ECO:0007669"/>
    <property type="project" value="UniProtKB-UniRule"/>
</dbReference>
<dbReference type="GO" id="GO:0071555">
    <property type="term" value="P:cell wall organization"/>
    <property type="evidence" value="ECO:0007669"/>
    <property type="project" value="UniProtKB-KW"/>
</dbReference>
<dbReference type="GO" id="GO:0009252">
    <property type="term" value="P:peptidoglycan biosynthetic process"/>
    <property type="evidence" value="ECO:0007669"/>
    <property type="project" value="UniProtKB-UniRule"/>
</dbReference>
<dbReference type="GO" id="GO:0008360">
    <property type="term" value="P:regulation of cell shape"/>
    <property type="evidence" value="ECO:0007669"/>
    <property type="project" value="UniProtKB-KW"/>
</dbReference>
<dbReference type="FunFam" id="3.40.50.1860:FF:000002">
    <property type="entry name" value="Glutamate racemase"/>
    <property type="match status" value="1"/>
</dbReference>
<dbReference type="Gene3D" id="3.40.50.1860">
    <property type="match status" value="2"/>
</dbReference>
<dbReference type="HAMAP" id="MF_00258">
    <property type="entry name" value="Glu_racemase"/>
    <property type="match status" value="1"/>
</dbReference>
<dbReference type="InterPro" id="IPR015942">
    <property type="entry name" value="Asp/Glu/hydantoin_racemase"/>
</dbReference>
<dbReference type="InterPro" id="IPR001920">
    <property type="entry name" value="Asp/Glu_race"/>
</dbReference>
<dbReference type="InterPro" id="IPR018187">
    <property type="entry name" value="Asp/Glu_racemase_AS_1"/>
</dbReference>
<dbReference type="InterPro" id="IPR033134">
    <property type="entry name" value="Asp/Glu_racemase_AS_2"/>
</dbReference>
<dbReference type="InterPro" id="IPR004391">
    <property type="entry name" value="Glu_race"/>
</dbReference>
<dbReference type="NCBIfam" id="TIGR00067">
    <property type="entry name" value="glut_race"/>
    <property type="match status" value="1"/>
</dbReference>
<dbReference type="PANTHER" id="PTHR21198">
    <property type="entry name" value="GLUTAMATE RACEMASE"/>
    <property type="match status" value="1"/>
</dbReference>
<dbReference type="PANTHER" id="PTHR21198:SF2">
    <property type="entry name" value="GLUTAMATE RACEMASE"/>
    <property type="match status" value="1"/>
</dbReference>
<dbReference type="Pfam" id="PF01177">
    <property type="entry name" value="Asp_Glu_race"/>
    <property type="match status" value="1"/>
</dbReference>
<dbReference type="SUPFAM" id="SSF53681">
    <property type="entry name" value="Aspartate/glutamate racemase"/>
    <property type="match status" value="2"/>
</dbReference>
<dbReference type="PROSITE" id="PS00923">
    <property type="entry name" value="ASP_GLU_RACEMASE_1"/>
    <property type="match status" value="1"/>
</dbReference>
<dbReference type="PROSITE" id="PS00924">
    <property type="entry name" value="ASP_GLU_RACEMASE_2"/>
    <property type="match status" value="1"/>
</dbReference>